<organism>
    <name type="scientific">Rhizobium meliloti (strain 1021)</name>
    <name type="common">Ensifer meliloti</name>
    <name type="synonym">Sinorhizobium meliloti</name>
    <dbReference type="NCBI Taxonomy" id="266834"/>
    <lineage>
        <taxon>Bacteria</taxon>
        <taxon>Pseudomonadati</taxon>
        <taxon>Pseudomonadota</taxon>
        <taxon>Alphaproteobacteria</taxon>
        <taxon>Hyphomicrobiales</taxon>
        <taxon>Rhizobiaceae</taxon>
        <taxon>Sinorhizobium/Ensifer group</taxon>
        <taxon>Sinorhizobium</taxon>
    </lineage>
</organism>
<proteinExistence type="inferred from homology"/>
<name>RL9_RHIME</name>
<reference key="1">
    <citation type="journal article" date="2001" name="Proc. Natl. Acad. Sci. U.S.A.">
        <title>Analysis of the chromosome sequence of the legume symbiont Sinorhizobium meliloti strain 1021.</title>
        <authorList>
            <person name="Capela D."/>
            <person name="Barloy-Hubler F."/>
            <person name="Gouzy J."/>
            <person name="Bothe G."/>
            <person name="Ampe F."/>
            <person name="Batut J."/>
            <person name="Boistard P."/>
            <person name="Becker A."/>
            <person name="Boutry M."/>
            <person name="Cadieu E."/>
            <person name="Dreano S."/>
            <person name="Gloux S."/>
            <person name="Godrie T."/>
            <person name="Goffeau A."/>
            <person name="Kahn D."/>
            <person name="Kiss E."/>
            <person name="Lelaure V."/>
            <person name="Masuy D."/>
            <person name="Pohl T."/>
            <person name="Portetelle D."/>
            <person name="Puehler A."/>
            <person name="Purnelle B."/>
            <person name="Ramsperger U."/>
            <person name="Renard C."/>
            <person name="Thebault P."/>
            <person name="Vandenbol M."/>
            <person name="Weidner S."/>
            <person name="Galibert F."/>
        </authorList>
    </citation>
    <scope>NUCLEOTIDE SEQUENCE [LARGE SCALE GENOMIC DNA]</scope>
    <source>
        <strain>1021</strain>
    </source>
</reference>
<reference key="2">
    <citation type="journal article" date="2001" name="Science">
        <title>The composite genome of the legume symbiont Sinorhizobium meliloti.</title>
        <authorList>
            <person name="Galibert F."/>
            <person name="Finan T.M."/>
            <person name="Long S.R."/>
            <person name="Puehler A."/>
            <person name="Abola P."/>
            <person name="Ampe F."/>
            <person name="Barloy-Hubler F."/>
            <person name="Barnett M.J."/>
            <person name="Becker A."/>
            <person name="Boistard P."/>
            <person name="Bothe G."/>
            <person name="Boutry M."/>
            <person name="Bowser L."/>
            <person name="Buhrmester J."/>
            <person name="Cadieu E."/>
            <person name="Capela D."/>
            <person name="Chain P."/>
            <person name="Cowie A."/>
            <person name="Davis R.W."/>
            <person name="Dreano S."/>
            <person name="Federspiel N.A."/>
            <person name="Fisher R.F."/>
            <person name="Gloux S."/>
            <person name="Godrie T."/>
            <person name="Goffeau A."/>
            <person name="Golding B."/>
            <person name="Gouzy J."/>
            <person name="Gurjal M."/>
            <person name="Hernandez-Lucas I."/>
            <person name="Hong A."/>
            <person name="Huizar L."/>
            <person name="Hyman R.W."/>
            <person name="Jones T."/>
            <person name="Kahn D."/>
            <person name="Kahn M.L."/>
            <person name="Kalman S."/>
            <person name="Keating D.H."/>
            <person name="Kiss E."/>
            <person name="Komp C."/>
            <person name="Lelaure V."/>
            <person name="Masuy D."/>
            <person name="Palm C."/>
            <person name="Peck M.C."/>
            <person name="Pohl T.M."/>
            <person name="Portetelle D."/>
            <person name="Purnelle B."/>
            <person name="Ramsperger U."/>
            <person name="Surzycki R."/>
            <person name="Thebault P."/>
            <person name="Vandenbol M."/>
            <person name="Vorhoelter F.J."/>
            <person name="Weidner S."/>
            <person name="Wells D.H."/>
            <person name="Wong K."/>
            <person name="Yeh K.-C."/>
            <person name="Batut J."/>
        </authorList>
    </citation>
    <scope>NUCLEOTIDE SEQUENCE [LARGE SCALE GENOMIC DNA]</scope>
    <source>
        <strain>1021</strain>
    </source>
</reference>
<keyword id="KW-1185">Reference proteome</keyword>
<keyword id="KW-0687">Ribonucleoprotein</keyword>
<keyword id="KW-0689">Ribosomal protein</keyword>
<keyword id="KW-0694">RNA-binding</keyword>
<keyword id="KW-0699">rRNA-binding</keyword>
<gene>
    <name evidence="1" type="primary">rplI</name>
    <name type="ordered locus">R01135</name>
    <name type="ORF">SMc00565</name>
</gene>
<sequence length="191" mass="20948">MEVILLERIAKLGQMGETVKVRDGFARNYLLPLGKALRANAANKARFESERSTLEARNLERKSEAQKVADSLDGKSFIIVRSAGETGQLYGSVAARDIVETLAAEGFNINRNQVDLNQPIKAIGLHKVTLHLHGEVDVAIEINVARSAEEAERQAKGESLTSADAIYGVDEDALKPEDFFNPEAELESEEE</sequence>
<protein>
    <recommendedName>
        <fullName evidence="1">Large ribosomal subunit protein bL9</fullName>
    </recommendedName>
    <alternativeName>
        <fullName evidence="3">50S ribosomal protein L9</fullName>
    </alternativeName>
</protein>
<dbReference type="EMBL" id="AL591688">
    <property type="protein sequence ID" value="CAC45714.1"/>
    <property type="molecule type" value="Genomic_DNA"/>
</dbReference>
<dbReference type="RefSeq" id="NP_385241.1">
    <property type="nucleotide sequence ID" value="NC_003047.1"/>
</dbReference>
<dbReference type="RefSeq" id="WP_003531697.1">
    <property type="nucleotide sequence ID" value="NC_003047.1"/>
</dbReference>
<dbReference type="SMR" id="Q92QZ9"/>
<dbReference type="EnsemblBacteria" id="CAC45714">
    <property type="protein sequence ID" value="CAC45714"/>
    <property type="gene ID" value="SMc00565"/>
</dbReference>
<dbReference type="GeneID" id="89575458"/>
<dbReference type="KEGG" id="sme:SMc00565"/>
<dbReference type="PATRIC" id="fig|266834.11.peg.2544"/>
<dbReference type="eggNOG" id="COG0359">
    <property type="taxonomic scope" value="Bacteria"/>
</dbReference>
<dbReference type="HOGENOM" id="CLU_078938_1_0_5"/>
<dbReference type="OrthoDB" id="9788336at2"/>
<dbReference type="Proteomes" id="UP000001976">
    <property type="component" value="Chromosome"/>
</dbReference>
<dbReference type="GO" id="GO:1990904">
    <property type="term" value="C:ribonucleoprotein complex"/>
    <property type="evidence" value="ECO:0007669"/>
    <property type="project" value="UniProtKB-KW"/>
</dbReference>
<dbReference type="GO" id="GO:0005840">
    <property type="term" value="C:ribosome"/>
    <property type="evidence" value="ECO:0007669"/>
    <property type="project" value="UniProtKB-KW"/>
</dbReference>
<dbReference type="GO" id="GO:0019843">
    <property type="term" value="F:rRNA binding"/>
    <property type="evidence" value="ECO:0007669"/>
    <property type="project" value="UniProtKB-UniRule"/>
</dbReference>
<dbReference type="GO" id="GO:0003735">
    <property type="term" value="F:structural constituent of ribosome"/>
    <property type="evidence" value="ECO:0007669"/>
    <property type="project" value="InterPro"/>
</dbReference>
<dbReference type="GO" id="GO:0006412">
    <property type="term" value="P:translation"/>
    <property type="evidence" value="ECO:0007669"/>
    <property type="project" value="UniProtKB-UniRule"/>
</dbReference>
<dbReference type="Gene3D" id="3.10.430.100">
    <property type="entry name" value="Ribosomal protein L9, C-terminal domain"/>
    <property type="match status" value="1"/>
</dbReference>
<dbReference type="Gene3D" id="3.40.5.10">
    <property type="entry name" value="Ribosomal protein L9, N-terminal domain"/>
    <property type="match status" value="1"/>
</dbReference>
<dbReference type="HAMAP" id="MF_00503">
    <property type="entry name" value="Ribosomal_bL9"/>
    <property type="match status" value="1"/>
</dbReference>
<dbReference type="InterPro" id="IPR000244">
    <property type="entry name" value="Ribosomal_bL9"/>
</dbReference>
<dbReference type="InterPro" id="IPR009027">
    <property type="entry name" value="Ribosomal_bL9/RNase_H1_N"/>
</dbReference>
<dbReference type="InterPro" id="IPR020594">
    <property type="entry name" value="Ribosomal_bL9_bac/chp"/>
</dbReference>
<dbReference type="InterPro" id="IPR020069">
    <property type="entry name" value="Ribosomal_bL9_C"/>
</dbReference>
<dbReference type="InterPro" id="IPR036791">
    <property type="entry name" value="Ribosomal_bL9_C_sf"/>
</dbReference>
<dbReference type="InterPro" id="IPR020070">
    <property type="entry name" value="Ribosomal_bL9_N"/>
</dbReference>
<dbReference type="InterPro" id="IPR036935">
    <property type="entry name" value="Ribosomal_bL9_N_sf"/>
</dbReference>
<dbReference type="NCBIfam" id="TIGR00158">
    <property type="entry name" value="L9"/>
    <property type="match status" value="1"/>
</dbReference>
<dbReference type="PANTHER" id="PTHR21368">
    <property type="entry name" value="50S RIBOSOMAL PROTEIN L9"/>
    <property type="match status" value="1"/>
</dbReference>
<dbReference type="Pfam" id="PF03948">
    <property type="entry name" value="Ribosomal_L9_C"/>
    <property type="match status" value="1"/>
</dbReference>
<dbReference type="Pfam" id="PF01281">
    <property type="entry name" value="Ribosomal_L9_N"/>
    <property type="match status" value="1"/>
</dbReference>
<dbReference type="SUPFAM" id="SSF55658">
    <property type="entry name" value="L9 N-domain-like"/>
    <property type="match status" value="1"/>
</dbReference>
<dbReference type="SUPFAM" id="SSF55653">
    <property type="entry name" value="Ribosomal protein L9 C-domain"/>
    <property type="match status" value="1"/>
</dbReference>
<dbReference type="PROSITE" id="PS00651">
    <property type="entry name" value="RIBOSOMAL_L9"/>
    <property type="match status" value="1"/>
</dbReference>
<evidence type="ECO:0000255" key="1">
    <source>
        <dbReference type="HAMAP-Rule" id="MF_00503"/>
    </source>
</evidence>
<evidence type="ECO:0000256" key="2">
    <source>
        <dbReference type="SAM" id="MobiDB-lite"/>
    </source>
</evidence>
<evidence type="ECO:0000305" key="3"/>
<feature type="chain" id="PRO_0000176667" description="Large ribosomal subunit protein bL9">
    <location>
        <begin position="1"/>
        <end position="191"/>
    </location>
</feature>
<feature type="region of interest" description="Disordered" evidence="2">
    <location>
        <begin position="171"/>
        <end position="191"/>
    </location>
</feature>
<accession>Q92QZ9</accession>
<comment type="function">
    <text evidence="1">Binds to the 23S rRNA.</text>
</comment>
<comment type="similarity">
    <text evidence="1">Belongs to the bacterial ribosomal protein bL9 family.</text>
</comment>